<sequence length="196" mass="22843">MEKFTIYTGTTVPLMNDNIDTDQILPKQFLKLIDKKGFGKYLMYSWRYKDNKYTEDPDFVFNRPEYRKATILITGDNFGAGSSREHAAWALADYGFKVVIAGSFGDIHYNNELNNGMLPIVQPIEVRRKLEQLKPTDEVTVDLEQQKIISPVGEFTFEIDGEWKHKLLNGLDDIGITMQYEDLITEYEKHRPSYWQ</sequence>
<accession>Q5M407</accession>
<keyword id="KW-0028">Amino-acid biosynthesis</keyword>
<keyword id="KW-0100">Branched-chain amino acid biosynthesis</keyword>
<keyword id="KW-0432">Leucine biosynthesis</keyword>
<keyword id="KW-0456">Lyase</keyword>
<keyword id="KW-1185">Reference proteome</keyword>
<proteinExistence type="inferred from homology"/>
<name>LEUD_STRT2</name>
<gene>
    <name evidence="1" type="primary">leuD</name>
    <name type="ordered locus">stu1200</name>
</gene>
<protein>
    <recommendedName>
        <fullName evidence="1">3-isopropylmalate dehydratase small subunit</fullName>
        <ecNumber evidence="1">4.2.1.33</ecNumber>
    </recommendedName>
    <alternativeName>
        <fullName evidence="1">Alpha-IPM isomerase</fullName>
        <shortName evidence="1">IPMI</shortName>
    </alternativeName>
    <alternativeName>
        <fullName evidence="1">Isopropylmalate isomerase</fullName>
    </alternativeName>
</protein>
<organism>
    <name type="scientific">Streptococcus thermophilus (strain ATCC BAA-250 / LMG 18311)</name>
    <dbReference type="NCBI Taxonomy" id="264199"/>
    <lineage>
        <taxon>Bacteria</taxon>
        <taxon>Bacillati</taxon>
        <taxon>Bacillota</taxon>
        <taxon>Bacilli</taxon>
        <taxon>Lactobacillales</taxon>
        <taxon>Streptococcaceae</taxon>
        <taxon>Streptococcus</taxon>
    </lineage>
</organism>
<reference key="1">
    <citation type="journal article" date="2004" name="Nat. Biotechnol.">
        <title>Complete sequence and comparative genome analysis of the dairy bacterium Streptococcus thermophilus.</title>
        <authorList>
            <person name="Bolotin A."/>
            <person name="Quinquis B."/>
            <person name="Renault P."/>
            <person name="Sorokin A."/>
            <person name="Ehrlich S.D."/>
            <person name="Kulakauskas S."/>
            <person name="Lapidus A."/>
            <person name="Goltsman E."/>
            <person name="Mazur M."/>
            <person name="Pusch G.D."/>
            <person name="Fonstein M."/>
            <person name="Overbeek R."/>
            <person name="Kyprides N."/>
            <person name="Purnelle B."/>
            <person name="Prozzi D."/>
            <person name="Ngui K."/>
            <person name="Masuy D."/>
            <person name="Hancy F."/>
            <person name="Burteau S."/>
            <person name="Boutry M."/>
            <person name="Delcour J."/>
            <person name="Goffeau A."/>
            <person name="Hols P."/>
        </authorList>
    </citation>
    <scope>NUCLEOTIDE SEQUENCE [LARGE SCALE GENOMIC DNA]</scope>
    <source>
        <strain>ATCC BAA-250 / LMG 18311</strain>
    </source>
</reference>
<comment type="function">
    <text evidence="1">Catalyzes the isomerization between 2-isopropylmalate and 3-isopropylmalate, via the formation of 2-isopropylmaleate.</text>
</comment>
<comment type="catalytic activity">
    <reaction evidence="1">
        <text>(2R,3S)-3-isopropylmalate = (2S)-2-isopropylmalate</text>
        <dbReference type="Rhea" id="RHEA:32287"/>
        <dbReference type="ChEBI" id="CHEBI:1178"/>
        <dbReference type="ChEBI" id="CHEBI:35121"/>
        <dbReference type="EC" id="4.2.1.33"/>
    </reaction>
</comment>
<comment type="pathway">
    <text evidence="1">Amino-acid biosynthesis; L-leucine biosynthesis; L-leucine from 3-methyl-2-oxobutanoate: step 2/4.</text>
</comment>
<comment type="subunit">
    <text evidence="1">Heterodimer of LeuC and LeuD.</text>
</comment>
<comment type="similarity">
    <text evidence="1">Belongs to the LeuD family. LeuD type 1 subfamily.</text>
</comment>
<dbReference type="EC" id="4.2.1.33" evidence="1"/>
<dbReference type="EMBL" id="CP000023">
    <property type="protein sequence ID" value="AAV60836.1"/>
    <property type="molecule type" value="Genomic_DNA"/>
</dbReference>
<dbReference type="RefSeq" id="WP_011226115.1">
    <property type="nucleotide sequence ID" value="NC_006448.1"/>
</dbReference>
<dbReference type="SMR" id="Q5M407"/>
<dbReference type="STRING" id="264199.stu1200"/>
<dbReference type="GeneID" id="66898993"/>
<dbReference type="KEGG" id="stl:stu1200"/>
<dbReference type="eggNOG" id="COG0066">
    <property type="taxonomic scope" value="Bacteria"/>
</dbReference>
<dbReference type="HOGENOM" id="CLU_081378_0_3_9"/>
<dbReference type="UniPathway" id="UPA00048">
    <property type="reaction ID" value="UER00071"/>
</dbReference>
<dbReference type="Proteomes" id="UP000001170">
    <property type="component" value="Chromosome"/>
</dbReference>
<dbReference type="GO" id="GO:0009316">
    <property type="term" value="C:3-isopropylmalate dehydratase complex"/>
    <property type="evidence" value="ECO:0007669"/>
    <property type="project" value="InterPro"/>
</dbReference>
<dbReference type="GO" id="GO:0003861">
    <property type="term" value="F:3-isopropylmalate dehydratase activity"/>
    <property type="evidence" value="ECO:0007669"/>
    <property type="project" value="UniProtKB-UniRule"/>
</dbReference>
<dbReference type="GO" id="GO:0009098">
    <property type="term" value="P:L-leucine biosynthetic process"/>
    <property type="evidence" value="ECO:0007669"/>
    <property type="project" value="UniProtKB-UniRule"/>
</dbReference>
<dbReference type="CDD" id="cd01577">
    <property type="entry name" value="IPMI_Swivel"/>
    <property type="match status" value="1"/>
</dbReference>
<dbReference type="FunFam" id="3.20.19.10:FF:000003">
    <property type="entry name" value="3-isopropylmalate dehydratase small subunit"/>
    <property type="match status" value="1"/>
</dbReference>
<dbReference type="Gene3D" id="3.20.19.10">
    <property type="entry name" value="Aconitase, domain 4"/>
    <property type="match status" value="1"/>
</dbReference>
<dbReference type="HAMAP" id="MF_01031">
    <property type="entry name" value="LeuD_type1"/>
    <property type="match status" value="1"/>
</dbReference>
<dbReference type="InterPro" id="IPR004431">
    <property type="entry name" value="3-IsopropMal_deHydase_ssu"/>
</dbReference>
<dbReference type="InterPro" id="IPR015928">
    <property type="entry name" value="Aconitase/3IPM_dehydase_swvl"/>
</dbReference>
<dbReference type="InterPro" id="IPR000573">
    <property type="entry name" value="AconitaseA/IPMdHydase_ssu_swvl"/>
</dbReference>
<dbReference type="InterPro" id="IPR033940">
    <property type="entry name" value="IPMI_Swivel"/>
</dbReference>
<dbReference type="InterPro" id="IPR050075">
    <property type="entry name" value="LeuD"/>
</dbReference>
<dbReference type="NCBIfam" id="TIGR00171">
    <property type="entry name" value="leuD"/>
    <property type="match status" value="1"/>
</dbReference>
<dbReference type="NCBIfam" id="NF002458">
    <property type="entry name" value="PRK01641.1"/>
    <property type="match status" value="1"/>
</dbReference>
<dbReference type="PANTHER" id="PTHR43345:SF5">
    <property type="entry name" value="3-ISOPROPYLMALATE DEHYDRATASE SMALL SUBUNIT"/>
    <property type="match status" value="1"/>
</dbReference>
<dbReference type="PANTHER" id="PTHR43345">
    <property type="entry name" value="3-ISOPROPYLMALATE DEHYDRATASE SMALL SUBUNIT 2-RELATED-RELATED"/>
    <property type="match status" value="1"/>
</dbReference>
<dbReference type="Pfam" id="PF00694">
    <property type="entry name" value="Aconitase_C"/>
    <property type="match status" value="1"/>
</dbReference>
<dbReference type="SUPFAM" id="SSF52016">
    <property type="entry name" value="LeuD/IlvD-like"/>
    <property type="match status" value="1"/>
</dbReference>
<evidence type="ECO:0000255" key="1">
    <source>
        <dbReference type="HAMAP-Rule" id="MF_01031"/>
    </source>
</evidence>
<feature type="chain" id="PRO_0000141895" description="3-isopropylmalate dehydratase small subunit">
    <location>
        <begin position="1"/>
        <end position="196"/>
    </location>
</feature>